<protein>
    <recommendedName>
        <fullName evidence="1">Glycerol-3-phosphate dehydrogenase [NAD(P)+]</fullName>
        <ecNumber evidence="1">1.1.1.94</ecNumber>
    </recommendedName>
    <alternativeName>
        <fullName evidence="1">NAD(P)(+)-dependent glycerol-3-phosphate dehydrogenase</fullName>
    </alternativeName>
    <alternativeName>
        <fullName evidence="1">NAD(P)H-dependent dihydroxyacetone-phosphate reductase</fullName>
    </alternativeName>
</protein>
<proteinExistence type="inferred from homology"/>
<accession>Q2NYA5</accession>
<keyword id="KW-0963">Cytoplasm</keyword>
<keyword id="KW-0444">Lipid biosynthesis</keyword>
<keyword id="KW-0443">Lipid metabolism</keyword>
<keyword id="KW-0520">NAD</keyword>
<keyword id="KW-0521">NADP</keyword>
<keyword id="KW-0547">Nucleotide-binding</keyword>
<keyword id="KW-0560">Oxidoreductase</keyword>
<keyword id="KW-0594">Phospholipid biosynthesis</keyword>
<keyword id="KW-1208">Phospholipid metabolism</keyword>
<evidence type="ECO:0000255" key="1">
    <source>
        <dbReference type="HAMAP-Rule" id="MF_00394"/>
    </source>
</evidence>
<feature type="chain" id="PRO_0000255399" description="Glycerol-3-phosphate dehydrogenase [NAD(P)+]">
    <location>
        <begin position="1"/>
        <end position="341"/>
    </location>
</feature>
<feature type="active site" description="Proton acceptor" evidence="1">
    <location>
        <position position="194"/>
    </location>
</feature>
<feature type="binding site" evidence="1">
    <location>
        <position position="15"/>
    </location>
    <ligand>
        <name>NADPH</name>
        <dbReference type="ChEBI" id="CHEBI:57783"/>
    </ligand>
</feature>
<feature type="binding site" evidence="1">
    <location>
        <position position="16"/>
    </location>
    <ligand>
        <name>NADPH</name>
        <dbReference type="ChEBI" id="CHEBI:57783"/>
    </ligand>
</feature>
<feature type="binding site" evidence="1">
    <location>
        <position position="36"/>
    </location>
    <ligand>
        <name>NADPH</name>
        <dbReference type="ChEBI" id="CHEBI:57783"/>
    </ligand>
</feature>
<feature type="binding site" evidence="1">
    <location>
        <position position="110"/>
    </location>
    <ligand>
        <name>NADPH</name>
        <dbReference type="ChEBI" id="CHEBI:57783"/>
    </ligand>
</feature>
<feature type="binding site" evidence="1">
    <location>
        <position position="110"/>
    </location>
    <ligand>
        <name>sn-glycerol 3-phosphate</name>
        <dbReference type="ChEBI" id="CHEBI:57597"/>
    </ligand>
</feature>
<feature type="binding site" evidence="1">
    <location>
        <position position="139"/>
    </location>
    <ligand>
        <name>sn-glycerol 3-phosphate</name>
        <dbReference type="ChEBI" id="CHEBI:57597"/>
    </ligand>
</feature>
<feature type="binding site" evidence="1">
    <location>
        <position position="141"/>
    </location>
    <ligand>
        <name>sn-glycerol 3-phosphate</name>
        <dbReference type="ChEBI" id="CHEBI:57597"/>
    </ligand>
</feature>
<feature type="binding site" evidence="1">
    <location>
        <position position="143"/>
    </location>
    <ligand>
        <name>NADPH</name>
        <dbReference type="ChEBI" id="CHEBI:57783"/>
    </ligand>
</feature>
<feature type="binding site" evidence="1">
    <location>
        <position position="194"/>
    </location>
    <ligand>
        <name>sn-glycerol 3-phosphate</name>
        <dbReference type="ChEBI" id="CHEBI:57597"/>
    </ligand>
</feature>
<feature type="binding site" evidence="1">
    <location>
        <position position="247"/>
    </location>
    <ligand>
        <name>sn-glycerol 3-phosphate</name>
        <dbReference type="ChEBI" id="CHEBI:57597"/>
    </ligand>
</feature>
<feature type="binding site" evidence="1">
    <location>
        <position position="257"/>
    </location>
    <ligand>
        <name>sn-glycerol 3-phosphate</name>
        <dbReference type="ChEBI" id="CHEBI:57597"/>
    </ligand>
</feature>
<feature type="binding site" evidence="1">
    <location>
        <position position="258"/>
    </location>
    <ligand>
        <name>NADPH</name>
        <dbReference type="ChEBI" id="CHEBI:57783"/>
    </ligand>
</feature>
<feature type="binding site" evidence="1">
    <location>
        <position position="258"/>
    </location>
    <ligand>
        <name>sn-glycerol 3-phosphate</name>
        <dbReference type="ChEBI" id="CHEBI:57597"/>
    </ligand>
</feature>
<feature type="binding site" evidence="1">
    <location>
        <position position="259"/>
    </location>
    <ligand>
        <name>sn-glycerol 3-phosphate</name>
        <dbReference type="ChEBI" id="CHEBI:57597"/>
    </ligand>
</feature>
<feature type="binding site" evidence="1">
    <location>
        <position position="282"/>
    </location>
    <ligand>
        <name>NADPH</name>
        <dbReference type="ChEBI" id="CHEBI:57783"/>
    </ligand>
</feature>
<feature type="binding site" evidence="1">
    <location>
        <position position="284"/>
    </location>
    <ligand>
        <name>NADPH</name>
        <dbReference type="ChEBI" id="CHEBI:57783"/>
    </ligand>
</feature>
<organism>
    <name type="scientific">Xanthomonas oryzae pv. oryzae (strain MAFF 311018)</name>
    <dbReference type="NCBI Taxonomy" id="342109"/>
    <lineage>
        <taxon>Bacteria</taxon>
        <taxon>Pseudomonadati</taxon>
        <taxon>Pseudomonadota</taxon>
        <taxon>Gammaproteobacteria</taxon>
        <taxon>Lysobacterales</taxon>
        <taxon>Lysobacteraceae</taxon>
        <taxon>Xanthomonas</taxon>
    </lineage>
</organism>
<comment type="function">
    <text evidence="1">Catalyzes the reduction of the glycolytic intermediate dihydroxyacetone phosphate (DHAP) to sn-glycerol 3-phosphate (G3P), the key precursor for phospholipid synthesis.</text>
</comment>
<comment type="catalytic activity">
    <reaction evidence="1">
        <text>sn-glycerol 3-phosphate + NAD(+) = dihydroxyacetone phosphate + NADH + H(+)</text>
        <dbReference type="Rhea" id="RHEA:11092"/>
        <dbReference type="ChEBI" id="CHEBI:15378"/>
        <dbReference type="ChEBI" id="CHEBI:57540"/>
        <dbReference type="ChEBI" id="CHEBI:57597"/>
        <dbReference type="ChEBI" id="CHEBI:57642"/>
        <dbReference type="ChEBI" id="CHEBI:57945"/>
        <dbReference type="EC" id="1.1.1.94"/>
    </reaction>
    <physiologicalReaction direction="right-to-left" evidence="1">
        <dbReference type="Rhea" id="RHEA:11094"/>
    </physiologicalReaction>
</comment>
<comment type="catalytic activity">
    <reaction evidence="1">
        <text>sn-glycerol 3-phosphate + NADP(+) = dihydroxyacetone phosphate + NADPH + H(+)</text>
        <dbReference type="Rhea" id="RHEA:11096"/>
        <dbReference type="ChEBI" id="CHEBI:15378"/>
        <dbReference type="ChEBI" id="CHEBI:57597"/>
        <dbReference type="ChEBI" id="CHEBI:57642"/>
        <dbReference type="ChEBI" id="CHEBI:57783"/>
        <dbReference type="ChEBI" id="CHEBI:58349"/>
        <dbReference type="EC" id="1.1.1.94"/>
    </reaction>
    <physiologicalReaction direction="right-to-left" evidence="1">
        <dbReference type="Rhea" id="RHEA:11098"/>
    </physiologicalReaction>
</comment>
<comment type="pathway">
    <text evidence="1">Membrane lipid metabolism; glycerophospholipid metabolism.</text>
</comment>
<comment type="subcellular location">
    <subcellularLocation>
        <location evidence="1">Cytoplasm</location>
    </subcellularLocation>
</comment>
<comment type="similarity">
    <text evidence="1">Belongs to the NAD-dependent glycerol-3-phosphate dehydrogenase family.</text>
</comment>
<reference key="1">
    <citation type="journal article" date="2005" name="Jpn. Agric. Res. Q.">
        <title>Genome sequence of Xanthomonas oryzae pv. oryzae suggests contribution of large numbers of effector genes and insertion sequences to its race diversity.</title>
        <authorList>
            <person name="Ochiai H."/>
            <person name="Inoue Y."/>
            <person name="Takeya M."/>
            <person name="Sasaki A."/>
            <person name="Kaku H."/>
        </authorList>
    </citation>
    <scope>NUCLEOTIDE SEQUENCE [LARGE SCALE GENOMIC DNA]</scope>
    <source>
        <strain>MAFF 311018</strain>
    </source>
</reference>
<gene>
    <name evidence="1" type="primary">gpsA</name>
    <name type="ordered locus">XOO3967</name>
</gene>
<dbReference type="EC" id="1.1.1.94" evidence="1"/>
<dbReference type="EMBL" id="AP008229">
    <property type="protein sequence ID" value="BAE70722.1"/>
    <property type="molecule type" value="Genomic_DNA"/>
</dbReference>
<dbReference type="RefSeq" id="WP_011409602.1">
    <property type="nucleotide sequence ID" value="NC_007705.1"/>
</dbReference>
<dbReference type="SMR" id="Q2NYA5"/>
<dbReference type="KEGG" id="xom:XOO3967"/>
<dbReference type="HOGENOM" id="CLU_033449_0_2_6"/>
<dbReference type="UniPathway" id="UPA00940"/>
<dbReference type="GO" id="GO:0005829">
    <property type="term" value="C:cytosol"/>
    <property type="evidence" value="ECO:0007669"/>
    <property type="project" value="TreeGrafter"/>
</dbReference>
<dbReference type="GO" id="GO:0047952">
    <property type="term" value="F:glycerol-3-phosphate dehydrogenase [NAD(P)+] activity"/>
    <property type="evidence" value="ECO:0007669"/>
    <property type="project" value="UniProtKB-UniRule"/>
</dbReference>
<dbReference type="GO" id="GO:0051287">
    <property type="term" value="F:NAD binding"/>
    <property type="evidence" value="ECO:0007669"/>
    <property type="project" value="InterPro"/>
</dbReference>
<dbReference type="GO" id="GO:0005975">
    <property type="term" value="P:carbohydrate metabolic process"/>
    <property type="evidence" value="ECO:0007669"/>
    <property type="project" value="InterPro"/>
</dbReference>
<dbReference type="GO" id="GO:0046167">
    <property type="term" value="P:glycerol-3-phosphate biosynthetic process"/>
    <property type="evidence" value="ECO:0007669"/>
    <property type="project" value="UniProtKB-UniRule"/>
</dbReference>
<dbReference type="GO" id="GO:0046168">
    <property type="term" value="P:glycerol-3-phosphate catabolic process"/>
    <property type="evidence" value="ECO:0007669"/>
    <property type="project" value="InterPro"/>
</dbReference>
<dbReference type="GO" id="GO:0046474">
    <property type="term" value="P:glycerophospholipid biosynthetic process"/>
    <property type="evidence" value="ECO:0007669"/>
    <property type="project" value="TreeGrafter"/>
</dbReference>
<dbReference type="FunFam" id="1.10.1040.10:FF:000001">
    <property type="entry name" value="Glycerol-3-phosphate dehydrogenase [NAD(P)+]"/>
    <property type="match status" value="1"/>
</dbReference>
<dbReference type="FunFam" id="3.40.50.720:FF:000019">
    <property type="entry name" value="Glycerol-3-phosphate dehydrogenase [NAD(P)+]"/>
    <property type="match status" value="1"/>
</dbReference>
<dbReference type="Gene3D" id="1.10.1040.10">
    <property type="entry name" value="N-(1-d-carboxylethyl)-l-norvaline Dehydrogenase, domain 2"/>
    <property type="match status" value="1"/>
</dbReference>
<dbReference type="Gene3D" id="3.40.50.720">
    <property type="entry name" value="NAD(P)-binding Rossmann-like Domain"/>
    <property type="match status" value="1"/>
</dbReference>
<dbReference type="HAMAP" id="MF_00394">
    <property type="entry name" value="NAD_Glyc3P_dehydrog"/>
    <property type="match status" value="1"/>
</dbReference>
<dbReference type="InterPro" id="IPR008927">
    <property type="entry name" value="6-PGluconate_DH-like_C_sf"/>
</dbReference>
<dbReference type="InterPro" id="IPR013328">
    <property type="entry name" value="6PGD_dom2"/>
</dbReference>
<dbReference type="InterPro" id="IPR006168">
    <property type="entry name" value="G3P_DH_NAD-dep"/>
</dbReference>
<dbReference type="InterPro" id="IPR006109">
    <property type="entry name" value="G3P_DH_NAD-dep_C"/>
</dbReference>
<dbReference type="InterPro" id="IPR011128">
    <property type="entry name" value="G3P_DH_NAD-dep_N"/>
</dbReference>
<dbReference type="InterPro" id="IPR036291">
    <property type="entry name" value="NAD(P)-bd_dom_sf"/>
</dbReference>
<dbReference type="NCBIfam" id="NF000940">
    <property type="entry name" value="PRK00094.1-2"/>
    <property type="match status" value="1"/>
</dbReference>
<dbReference type="NCBIfam" id="NF000942">
    <property type="entry name" value="PRK00094.1-4"/>
    <property type="match status" value="1"/>
</dbReference>
<dbReference type="PANTHER" id="PTHR11728">
    <property type="entry name" value="GLYCEROL-3-PHOSPHATE DEHYDROGENASE"/>
    <property type="match status" value="1"/>
</dbReference>
<dbReference type="PANTHER" id="PTHR11728:SF1">
    <property type="entry name" value="GLYCEROL-3-PHOSPHATE DEHYDROGENASE [NAD(+)] 2, CHLOROPLASTIC"/>
    <property type="match status" value="1"/>
</dbReference>
<dbReference type="Pfam" id="PF07479">
    <property type="entry name" value="NAD_Gly3P_dh_C"/>
    <property type="match status" value="1"/>
</dbReference>
<dbReference type="Pfam" id="PF01210">
    <property type="entry name" value="NAD_Gly3P_dh_N"/>
    <property type="match status" value="1"/>
</dbReference>
<dbReference type="PIRSF" id="PIRSF000114">
    <property type="entry name" value="Glycerol-3-P_dh"/>
    <property type="match status" value="1"/>
</dbReference>
<dbReference type="PRINTS" id="PR00077">
    <property type="entry name" value="GPDHDRGNASE"/>
</dbReference>
<dbReference type="SUPFAM" id="SSF48179">
    <property type="entry name" value="6-phosphogluconate dehydrogenase C-terminal domain-like"/>
    <property type="match status" value="1"/>
</dbReference>
<dbReference type="SUPFAM" id="SSF51735">
    <property type="entry name" value="NAD(P)-binding Rossmann-fold domains"/>
    <property type="match status" value="1"/>
</dbReference>
<dbReference type="PROSITE" id="PS00957">
    <property type="entry name" value="NAD_G3PDH"/>
    <property type="match status" value="1"/>
</dbReference>
<name>GPDA_XANOM</name>
<sequence>MSDSTHKIAVIGAGSWGTALAALLARHGHPTVLWGRDAAMVDTIDRTHENARYLPGIALPDSLRATTDLQAAVADAAWILVVVPSHAFTETIRLIAPLRPACPGVAWATKGFEPGSGRFLHEVARDILGPSVPLAVVTGPSFAKEVTLGLPTAITVHGDDATFAQAVADAMHGPTFRAYTGDDMVGAELGGAMKNVLAVATGVADGMQLGLNARAGLITRGLNEMLRLAAAIGARPETLMGLAGLGDLVLTCTGDLSRNRRLGLALGRGQSLNDAIRQIGQVVESVQMADEVMRQAEHHGIELPISNAVRAVLHGEITPEAGLKELLARERKPEYPQTLFT</sequence>